<dbReference type="EMBL" id="BC056703">
    <property type="protein sequence ID" value="AAH56703.1"/>
    <property type="molecule type" value="mRNA"/>
</dbReference>
<dbReference type="RefSeq" id="NP_956874.1">
    <property type="nucleotide sequence ID" value="NM_200580.1"/>
</dbReference>
<dbReference type="SMR" id="Q6PH61"/>
<dbReference type="FunCoup" id="Q6PH61">
    <property type="interactions" value="566"/>
</dbReference>
<dbReference type="STRING" id="7955.ENSDARP00000108999"/>
<dbReference type="GeneID" id="393552"/>
<dbReference type="KEGG" id="dre:393552"/>
<dbReference type="AGR" id="ZFIN:ZDB-GENE-040426-1442"/>
<dbReference type="CTD" id="284723"/>
<dbReference type="ZFIN" id="ZDB-GENE-040426-1442">
    <property type="gene designation" value="slc25a34"/>
</dbReference>
<dbReference type="InParanoid" id="Q6PH61"/>
<dbReference type="OrthoDB" id="6703404at2759"/>
<dbReference type="PhylomeDB" id="Q6PH61"/>
<dbReference type="PRO" id="PR:Q6PH61"/>
<dbReference type="Proteomes" id="UP000000437">
    <property type="component" value="Chromosome 22"/>
</dbReference>
<dbReference type="GO" id="GO:0005743">
    <property type="term" value="C:mitochondrial inner membrane"/>
    <property type="evidence" value="ECO:0007669"/>
    <property type="project" value="UniProtKB-SubCell"/>
</dbReference>
<dbReference type="FunFam" id="1.50.40.10:FF:000039">
    <property type="entry name" value="Solute carrier family 25 member 35"/>
    <property type="match status" value="1"/>
</dbReference>
<dbReference type="Gene3D" id="1.50.40.10">
    <property type="entry name" value="Mitochondrial carrier domain"/>
    <property type="match status" value="1"/>
</dbReference>
<dbReference type="InterPro" id="IPR051508">
    <property type="entry name" value="Mito_Carrier_Antiporter"/>
</dbReference>
<dbReference type="InterPro" id="IPR018108">
    <property type="entry name" value="Mitochondrial_sb/sol_carrier"/>
</dbReference>
<dbReference type="InterPro" id="IPR023395">
    <property type="entry name" value="Mt_carrier_dom_sf"/>
</dbReference>
<dbReference type="PANTHER" id="PTHR45928">
    <property type="entry name" value="RE38146P"/>
    <property type="match status" value="1"/>
</dbReference>
<dbReference type="PANTHER" id="PTHR45928:SF3">
    <property type="entry name" value="SOLUTE CARRIER FAMILY 25 MEMBER 34"/>
    <property type="match status" value="1"/>
</dbReference>
<dbReference type="Pfam" id="PF00153">
    <property type="entry name" value="Mito_carr"/>
    <property type="match status" value="3"/>
</dbReference>
<dbReference type="SUPFAM" id="SSF103506">
    <property type="entry name" value="Mitochondrial carrier"/>
    <property type="match status" value="1"/>
</dbReference>
<dbReference type="PROSITE" id="PS50920">
    <property type="entry name" value="SOLCAR"/>
    <property type="match status" value="3"/>
</dbReference>
<proteinExistence type="evidence at transcript level"/>
<evidence type="ECO:0000250" key="1"/>
<evidence type="ECO:0000255" key="2"/>
<evidence type="ECO:0000256" key="3">
    <source>
        <dbReference type="SAM" id="MobiDB-lite"/>
    </source>
</evidence>
<evidence type="ECO:0000305" key="4"/>
<feature type="chain" id="PRO_0000291792" description="Solute carrier family 25 member 34">
    <location>
        <begin position="1"/>
        <end position="319"/>
    </location>
</feature>
<feature type="transmembrane region" description="Helical; Name=1" evidence="2">
    <location>
        <begin position="25"/>
        <end position="45"/>
    </location>
</feature>
<feature type="transmembrane region" description="Helical; Name=2" evidence="2">
    <location>
        <begin position="63"/>
        <end position="83"/>
    </location>
</feature>
<feature type="transmembrane region" description="Helical; Name=3" evidence="2">
    <location>
        <begin position="116"/>
        <end position="138"/>
    </location>
</feature>
<feature type="transmembrane region" description="Helical; Name=4" evidence="2">
    <location>
        <begin position="188"/>
        <end position="209"/>
    </location>
</feature>
<feature type="transmembrane region" description="Helical; Name=5" evidence="2">
    <location>
        <begin position="224"/>
        <end position="244"/>
    </location>
</feature>
<feature type="transmembrane region" description="Helical; Name=6" evidence="2">
    <location>
        <begin position="296"/>
        <end position="319"/>
    </location>
</feature>
<feature type="repeat" description="Solcar 1">
    <location>
        <begin position="22"/>
        <end position="115"/>
    </location>
</feature>
<feature type="repeat" description="Solcar 2">
    <location>
        <begin position="119"/>
        <end position="212"/>
    </location>
</feature>
<feature type="repeat" description="Solcar 3">
    <location>
        <begin position="222"/>
        <end position="313"/>
    </location>
</feature>
<feature type="region of interest" description="Disordered" evidence="3">
    <location>
        <begin position="1"/>
        <end position="22"/>
    </location>
</feature>
<feature type="compositionally biased region" description="Pro residues" evidence="3">
    <location>
        <begin position="10"/>
        <end position="22"/>
    </location>
</feature>
<accession>Q6PH61</accession>
<name>S2534_DANRE</name>
<organism>
    <name type="scientific">Danio rerio</name>
    <name type="common">Zebrafish</name>
    <name type="synonym">Brachydanio rerio</name>
    <dbReference type="NCBI Taxonomy" id="7955"/>
    <lineage>
        <taxon>Eukaryota</taxon>
        <taxon>Metazoa</taxon>
        <taxon>Chordata</taxon>
        <taxon>Craniata</taxon>
        <taxon>Vertebrata</taxon>
        <taxon>Euteleostomi</taxon>
        <taxon>Actinopterygii</taxon>
        <taxon>Neopterygii</taxon>
        <taxon>Teleostei</taxon>
        <taxon>Ostariophysi</taxon>
        <taxon>Cypriniformes</taxon>
        <taxon>Danionidae</taxon>
        <taxon>Danioninae</taxon>
        <taxon>Danio</taxon>
    </lineage>
</organism>
<comment type="subcellular location">
    <subcellularLocation>
        <location evidence="1">Mitochondrion inner membrane</location>
        <topology evidence="1">Multi-pass membrane protein</topology>
    </subcellularLocation>
</comment>
<comment type="similarity">
    <text evidence="4">Belongs to the mitochondrial carrier (TC 2.A.29) family.</text>
</comment>
<reference key="1">
    <citation type="submission" date="2003-08" db="EMBL/GenBank/DDBJ databases">
        <authorList>
            <consortium name="NIH - Zebrafish Gene Collection (ZGC) project"/>
        </authorList>
    </citation>
    <scope>NUCLEOTIDE SEQUENCE [LARGE SCALE MRNA]</scope>
    <source>
        <tissue>Embryo</tissue>
    </source>
</reference>
<gene>
    <name type="primary">slc25a34</name>
    <name type="ORF">zgc:65857</name>
</gene>
<protein>
    <recommendedName>
        <fullName>Solute carrier family 25 member 34</fullName>
    </recommendedName>
</protein>
<sequence>MNSAFSGPSSPTPGPSPPRPPLWPPLDFGLGALACCGACVFTNPLEVVKTRLQLQGELRARGSYRRLYRGVLQALWVVGRTDGLRGLQKGLTAALLYQGLMNGLRLGSYAQMQAAGVTDGPCCSLIAGAAAGALGAFIASPAYLVKTHLQAQTVAAIAVGHQHNHQGMSSALVSIYRREGVCGLWRGVNGAVPRVMVGSATQLATFSSAKDWITHTQWFSPLSSLNTLCAAVMSGVAVSIIMTPFDVISTRLYNQPVDQFKQGRLYCGFVDCLLKVCAAEGVLGLYKGMTPVFVRLAPHTTLSMLLWDVLRQRALPYTH</sequence>
<keyword id="KW-0472">Membrane</keyword>
<keyword id="KW-0496">Mitochondrion</keyword>
<keyword id="KW-0999">Mitochondrion inner membrane</keyword>
<keyword id="KW-1185">Reference proteome</keyword>
<keyword id="KW-0677">Repeat</keyword>
<keyword id="KW-0812">Transmembrane</keyword>
<keyword id="KW-1133">Transmembrane helix</keyword>
<keyword id="KW-0813">Transport</keyword>